<proteinExistence type="inferred from homology"/>
<dbReference type="EC" id="6.3.4.2" evidence="1"/>
<dbReference type="EMBL" id="BX571965">
    <property type="protein sequence ID" value="CAH36275.1"/>
    <property type="molecule type" value="Genomic_DNA"/>
</dbReference>
<dbReference type="RefSeq" id="WP_004192790.1">
    <property type="nucleotide sequence ID" value="NZ_CP009538.1"/>
</dbReference>
<dbReference type="RefSeq" id="YP_108868.1">
    <property type="nucleotide sequence ID" value="NC_006350.1"/>
</dbReference>
<dbReference type="SMR" id="Q63SP8"/>
<dbReference type="STRING" id="272560.BPSL2272"/>
<dbReference type="KEGG" id="bps:BPSL2272"/>
<dbReference type="PATRIC" id="fig|272560.51.peg.3158"/>
<dbReference type="eggNOG" id="COG0504">
    <property type="taxonomic scope" value="Bacteria"/>
</dbReference>
<dbReference type="UniPathway" id="UPA00159">
    <property type="reaction ID" value="UER00277"/>
</dbReference>
<dbReference type="Proteomes" id="UP000000605">
    <property type="component" value="Chromosome 1"/>
</dbReference>
<dbReference type="GO" id="GO:0005829">
    <property type="term" value="C:cytosol"/>
    <property type="evidence" value="ECO:0007669"/>
    <property type="project" value="TreeGrafter"/>
</dbReference>
<dbReference type="GO" id="GO:0005524">
    <property type="term" value="F:ATP binding"/>
    <property type="evidence" value="ECO:0007669"/>
    <property type="project" value="UniProtKB-KW"/>
</dbReference>
<dbReference type="GO" id="GO:0003883">
    <property type="term" value="F:CTP synthase activity"/>
    <property type="evidence" value="ECO:0007669"/>
    <property type="project" value="UniProtKB-UniRule"/>
</dbReference>
<dbReference type="GO" id="GO:0004359">
    <property type="term" value="F:glutaminase activity"/>
    <property type="evidence" value="ECO:0007669"/>
    <property type="project" value="RHEA"/>
</dbReference>
<dbReference type="GO" id="GO:0042802">
    <property type="term" value="F:identical protein binding"/>
    <property type="evidence" value="ECO:0007669"/>
    <property type="project" value="TreeGrafter"/>
</dbReference>
<dbReference type="GO" id="GO:0046872">
    <property type="term" value="F:metal ion binding"/>
    <property type="evidence" value="ECO:0007669"/>
    <property type="project" value="UniProtKB-KW"/>
</dbReference>
<dbReference type="GO" id="GO:0044210">
    <property type="term" value="P:'de novo' CTP biosynthetic process"/>
    <property type="evidence" value="ECO:0007669"/>
    <property type="project" value="UniProtKB-UniRule"/>
</dbReference>
<dbReference type="GO" id="GO:0019856">
    <property type="term" value="P:pyrimidine nucleobase biosynthetic process"/>
    <property type="evidence" value="ECO:0007669"/>
    <property type="project" value="TreeGrafter"/>
</dbReference>
<dbReference type="CDD" id="cd03113">
    <property type="entry name" value="CTPS_N"/>
    <property type="match status" value="1"/>
</dbReference>
<dbReference type="CDD" id="cd01746">
    <property type="entry name" value="GATase1_CTP_Synthase"/>
    <property type="match status" value="1"/>
</dbReference>
<dbReference type="FunFam" id="3.40.50.300:FF:000009">
    <property type="entry name" value="CTP synthase"/>
    <property type="match status" value="1"/>
</dbReference>
<dbReference type="FunFam" id="3.40.50.880:FF:000002">
    <property type="entry name" value="CTP synthase"/>
    <property type="match status" value="1"/>
</dbReference>
<dbReference type="Gene3D" id="3.40.50.880">
    <property type="match status" value="1"/>
</dbReference>
<dbReference type="Gene3D" id="3.40.50.300">
    <property type="entry name" value="P-loop containing nucleotide triphosphate hydrolases"/>
    <property type="match status" value="1"/>
</dbReference>
<dbReference type="HAMAP" id="MF_01227">
    <property type="entry name" value="PyrG"/>
    <property type="match status" value="1"/>
</dbReference>
<dbReference type="InterPro" id="IPR029062">
    <property type="entry name" value="Class_I_gatase-like"/>
</dbReference>
<dbReference type="InterPro" id="IPR004468">
    <property type="entry name" value="CTP_synthase"/>
</dbReference>
<dbReference type="InterPro" id="IPR017456">
    <property type="entry name" value="CTP_synthase_N"/>
</dbReference>
<dbReference type="InterPro" id="IPR017926">
    <property type="entry name" value="GATASE"/>
</dbReference>
<dbReference type="InterPro" id="IPR033828">
    <property type="entry name" value="GATase1_CTP_Synthase"/>
</dbReference>
<dbReference type="InterPro" id="IPR027417">
    <property type="entry name" value="P-loop_NTPase"/>
</dbReference>
<dbReference type="NCBIfam" id="NF003792">
    <property type="entry name" value="PRK05380.1"/>
    <property type="match status" value="1"/>
</dbReference>
<dbReference type="NCBIfam" id="TIGR00337">
    <property type="entry name" value="PyrG"/>
    <property type="match status" value="1"/>
</dbReference>
<dbReference type="PANTHER" id="PTHR11550">
    <property type="entry name" value="CTP SYNTHASE"/>
    <property type="match status" value="1"/>
</dbReference>
<dbReference type="PANTHER" id="PTHR11550:SF0">
    <property type="entry name" value="CTP SYNTHASE-RELATED"/>
    <property type="match status" value="1"/>
</dbReference>
<dbReference type="Pfam" id="PF06418">
    <property type="entry name" value="CTP_synth_N"/>
    <property type="match status" value="1"/>
</dbReference>
<dbReference type="Pfam" id="PF00117">
    <property type="entry name" value="GATase"/>
    <property type="match status" value="1"/>
</dbReference>
<dbReference type="SUPFAM" id="SSF52317">
    <property type="entry name" value="Class I glutamine amidotransferase-like"/>
    <property type="match status" value="1"/>
</dbReference>
<dbReference type="SUPFAM" id="SSF52540">
    <property type="entry name" value="P-loop containing nucleoside triphosphate hydrolases"/>
    <property type="match status" value="1"/>
</dbReference>
<dbReference type="PROSITE" id="PS51273">
    <property type="entry name" value="GATASE_TYPE_1"/>
    <property type="match status" value="1"/>
</dbReference>
<keyword id="KW-0067">ATP-binding</keyword>
<keyword id="KW-0315">Glutamine amidotransferase</keyword>
<keyword id="KW-0436">Ligase</keyword>
<keyword id="KW-0460">Magnesium</keyword>
<keyword id="KW-0479">Metal-binding</keyword>
<keyword id="KW-0547">Nucleotide-binding</keyword>
<keyword id="KW-0665">Pyrimidine biosynthesis</keyword>
<keyword id="KW-1185">Reference proteome</keyword>
<accession>Q63SP8</accession>
<evidence type="ECO:0000255" key="1">
    <source>
        <dbReference type="HAMAP-Rule" id="MF_01227"/>
    </source>
</evidence>
<reference key="1">
    <citation type="journal article" date="2004" name="Proc. Natl. Acad. Sci. U.S.A.">
        <title>Genomic plasticity of the causative agent of melioidosis, Burkholderia pseudomallei.</title>
        <authorList>
            <person name="Holden M.T.G."/>
            <person name="Titball R.W."/>
            <person name="Peacock S.J."/>
            <person name="Cerdeno-Tarraga A.-M."/>
            <person name="Atkins T."/>
            <person name="Crossman L.C."/>
            <person name="Pitt T."/>
            <person name="Churcher C."/>
            <person name="Mungall K.L."/>
            <person name="Bentley S.D."/>
            <person name="Sebaihia M."/>
            <person name="Thomson N.R."/>
            <person name="Bason N."/>
            <person name="Beacham I.R."/>
            <person name="Brooks K."/>
            <person name="Brown K.A."/>
            <person name="Brown N.F."/>
            <person name="Challis G.L."/>
            <person name="Cherevach I."/>
            <person name="Chillingworth T."/>
            <person name="Cronin A."/>
            <person name="Crossett B."/>
            <person name="Davis P."/>
            <person name="DeShazer D."/>
            <person name="Feltwell T."/>
            <person name="Fraser A."/>
            <person name="Hance Z."/>
            <person name="Hauser H."/>
            <person name="Holroyd S."/>
            <person name="Jagels K."/>
            <person name="Keith K.E."/>
            <person name="Maddison M."/>
            <person name="Moule S."/>
            <person name="Price C."/>
            <person name="Quail M.A."/>
            <person name="Rabbinowitsch E."/>
            <person name="Rutherford K."/>
            <person name="Sanders M."/>
            <person name="Simmonds M."/>
            <person name="Songsivilai S."/>
            <person name="Stevens K."/>
            <person name="Tumapa S."/>
            <person name="Vesaratchavest M."/>
            <person name="Whitehead S."/>
            <person name="Yeats C."/>
            <person name="Barrell B.G."/>
            <person name="Oyston P.C.F."/>
            <person name="Parkhill J."/>
        </authorList>
    </citation>
    <scope>NUCLEOTIDE SEQUENCE [LARGE SCALE GENOMIC DNA]</scope>
    <source>
        <strain>K96243</strain>
    </source>
</reference>
<gene>
    <name evidence="1" type="primary">pyrG</name>
    <name type="ordered locus">BPSL2272</name>
</gene>
<name>PYRG_BURPS</name>
<comment type="function">
    <text evidence="1">Catalyzes the ATP-dependent amination of UTP to CTP with either L-glutamine or ammonia as the source of nitrogen. Regulates intracellular CTP levels through interactions with the four ribonucleotide triphosphates.</text>
</comment>
<comment type="catalytic activity">
    <reaction evidence="1">
        <text>UTP + L-glutamine + ATP + H2O = CTP + L-glutamate + ADP + phosphate + 2 H(+)</text>
        <dbReference type="Rhea" id="RHEA:26426"/>
        <dbReference type="ChEBI" id="CHEBI:15377"/>
        <dbReference type="ChEBI" id="CHEBI:15378"/>
        <dbReference type="ChEBI" id="CHEBI:29985"/>
        <dbReference type="ChEBI" id="CHEBI:30616"/>
        <dbReference type="ChEBI" id="CHEBI:37563"/>
        <dbReference type="ChEBI" id="CHEBI:43474"/>
        <dbReference type="ChEBI" id="CHEBI:46398"/>
        <dbReference type="ChEBI" id="CHEBI:58359"/>
        <dbReference type="ChEBI" id="CHEBI:456216"/>
        <dbReference type="EC" id="6.3.4.2"/>
    </reaction>
</comment>
<comment type="catalytic activity">
    <reaction evidence="1">
        <text>L-glutamine + H2O = L-glutamate + NH4(+)</text>
        <dbReference type="Rhea" id="RHEA:15889"/>
        <dbReference type="ChEBI" id="CHEBI:15377"/>
        <dbReference type="ChEBI" id="CHEBI:28938"/>
        <dbReference type="ChEBI" id="CHEBI:29985"/>
        <dbReference type="ChEBI" id="CHEBI:58359"/>
    </reaction>
</comment>
<comment type="catalytic activity">
    <reaction evidence="1">
        <text>UTP + NH4(+) + ATP = CTP + ADP + phosphate + 2 H(+)</text>
        <dbReference type="Rhea" id="RHEA:16597"/>
        <dbReference type="ChEBI" id="CHEBI:15378"/>
        <dbReference type="ChEBI" id="CHEBI:28938"/>
        <dbReference type="ChEBI" id="CHEBI:30616"/>
        <dbReference type="ChEBI" id="CHEBI:37563"/>
        <dbReference type="ChEBI" id="CHEBI:43474"/>
        <dbReference type="ChEBI" id="CHEBI:46398"/>
        <dbReference type="ChEBI" id="CHEBI:456216"/>
    </reaction>
</comment>
<comment type="activity regulation">
    <text evidence="1">Allosterically activated by GTP, when glutamine is the substrate; GTP has no effect on the reaction when ammonia is the substrate. The allosteric effector GTP functions by stabilizing the protein conformation that binds the tetrahedral intermediate(s) formed during glutamine hydrolysis. Inhibited by the product CTP, via allosteric rather than competitive inhibition.</text>
</comment>
<comment type="pathway">
    <text evidence="1">Pyrimidine metabolism; CTP biosynthesis via de novo pathway; CTP from UDP: step 2/2.</text>
</comment>
<comment type="subunit">
    <text evidence="1">Homotetramer.</text>
</comment>
<comment type="miscellaneous">
    <text evidence="1">CTPSs have evolved a hybrid strategy for distinguishing between UTP and CTP. The overlapping regions of the product feedback inhibitory and substrate sites recognize a common feature in both compounds, the triphosphate moiety. To differentiate isosteric substrate and product pyrimidine rings, an additional pocket far from the expected kinase/ligase catalytic site, specifically recognizes the cytosine and ribose portions of the product inhibitor.</text>
</comment>
<comment type="similarity">
    <text evidence="1">Belongs to the CTP synthase family.</text>
</comment>
<protein>
    <recommendedName>
        <fullName evidence="1">CTP synthase</fullName>
        <ecNumber evidence="1">6.3.4.2</ecNumber>
    </recommendedName>
    <alternativeName>
        <fullName evidence="1">Cytidine 5'-triphosphate synthase</fullName>
    </alternativeName>
    <alternativeName>
        <fullName evidence="1">Cytidine triphosphate synthetase</fullName>
        <shortName evidence="1">CTP synthetase</shortName>
        <shortName evidence="1">CTPS</shortName>
    </alternativeName>
    <alternativeName>
        <fullName evidence="1">UTP--ammonia ligase</fullName>
    </alternativeName>
</protein>
<organism>
    <name type="scientific">Burkholderia pseudomallei (strain K96243)</name>
    <dbReference type="NCBI Taxonomy" id="272560"/>
    <lineage>
        <taxon>Bacteria</taxon>
        <taxon>Pseudomonadati</taxon>
        <taxon>Pseudomonadota</taxon>
        <taxon>Betaproteobacteria</taxon>
        <taxon>Burkholderiales</taxon>
        <taxon>Burkholderiaceae</taxon>
        <taxon>Burkholderia</taxon>
        <taxon>pseudomallei group</taxon>
    </lineage>
</organism>
<sequence length="553" mass="61042">MTKYVFVTGGVVSSLGKGIAAASLAAILESRGLKVTLLKLDPYINVDPGTMSPFQHGEVFVTEDGAETDLDLGHYERFISTKMRKANNFTTGQIYESVIRKERRGDYLGKTVQVIPHITNEIQAFIERGAASATCGEPDVAIVEIGGTVGDIESLPFLEAARQMSLRLGRNSACFVHLTLVPFIATAGELKTKPTQHSVQKLREIGISPHVLLCRADRPIPDDESKKISLFSNVPEDAVISVWDVDSIYKIPQMLHDQGLDRLICEELRLDPQPADLRMWAALVEKLQNPKHEVTIGMVGKYVDLTESYKSLIEALRHASIHTSTKVNIEYIDSEELETNGTASLAHLDAVLVPGGFGRRGTEGKIAAVRYAREAKVPYLGICLGMQLAVIEFARDVVGLKQANSTEFDPNTPERVVALITEWYDREGKVEKRTEDSDLGGTMRLGSQRCPIKPGTLAEAIYGKDVNERHRHRYEVNNRFVPQLEAGGLVISARTPSEDLPEMMELPSTMHPWFVGVQFHPEFTSTPRDGHPLFKSFVQAALACQQTRAGAKA</sequence>
<feature type="chain" id="PRO_0000266083" description="CTP synthase">
    <location>
        <begin position="1"/>
        <end position="553"/>
    </location>
</feature>
<feature type="domain" description="Glutamine amidotransferase type-1" evidence="1">
    <location>
        <begin position="295"/>
        <end position="547"/>
    </location>
</feature>
<feature type="region of interest" description="Amidoligase domain" evidence="1">
    <location>
        <begin position="1"/>
        <end position="270"/>
    </location>
</feature>
<feature type="active site" description="Nucleophile; for glutamine hydrolysis" evidence="1">
    <location>
        <position position="383"/>
    </location>
</feature>
<feature type="active site" evidence="1">
    <location>
        <position position="520"/>
    </location>
</feature>
<feature type="active site" evidence="1">
    <location>
        <position position="522"/>
    </location>
</feature>
<feature type="binding site" evidence="1">
    <location>
        <position position="13"/>
    </location>
    <ligand>
        <name>CTP</name>
        <dbReference type="ChEBI" id="CHEBI:37563"/>
        <note>allosteric inhibitor</note>
    </ligand>
</feature>
<feature type="binding site" evidence="1">
    <location>
        <position position="13"/>
    </location>
    <ligand>
        <name>UTP</name>
        <dbReference type="ChEBI" id="CHEBI:46398"/>
    </ligand>
</feature>
<feature type="binding site" evidence="1">
    <location>
        <begin position="14"/>
        <end position="19"/>
    </location>
    <ligand>
        <name>ATP</name>
        <dbReference type="ChEBI" id="CHEBI:30616"/>
    </ligand>
</feature>
<feature type="binding site" evidence="1">
    <location>
        <position position="71"/>
    </location>
    <ligand>
        <name>ATP</name>
        <dbReference type="ChEBI" id="CHEBI:30616"/>
    </ligand>
</feature>
<feature type="binding site" evidence="1">
    <location>
        <position position="71"/>
    </location>
    <ligand>
        <name>Mg(2+)</name>
        <dbReference type="ChEBI" id="CHEBI:18420"/>
    </ligand>
</feature>
<feature type="binding site" evidence="1">
    <location>
        <position position="144"/>
    </location>
    <ligand>
        <name>Mg(2+)</name>
        <dbReference type="ChEBI" id="CHEBI:18420"/>
    </ligand>
</feature>
<feature type="binding site" evidence="1">
    <location>
        <begin position="151"/>
        <end position="153"/>
    </location>
    <ligand>
        <name>CTP</name>
        <dbReference type="ChEBI" id="CHEBI:37563"/>
        <note>allosteric inhibitor</note>
    </ligand>
</feature>
<feature type="binding site" evidence="1">
    <location>
        <begin position="191"/>
        <end position="196"/>
    </location>
    <ligand>
        <name>CTP</name>
        <dbReference type="ChEBI" id="CHEBI:37563"/>
        <note>allosteric inhibitor</note>
    </ligand>
</feature>
<feature type="binding site" evidence="1">
    <location>
        <begin position="191"/>
        <end position="196"/>
    </location>
    <ligand>
        <name>UTP</name>
        <dbReference type="ChEBI" id="CHEBI:46398"/>
    </ligand>
</feature>
<feature type="binding site" evidence="1">
    <location>
        <position position="227"/>
    </location>
    <ligand>
        <name>CTP</name>
        <dbReference type="ChEBI" id="CHEBI:37563"/>
        <note>allosteric inhibitor</note>
    </ligand>
</feature>
<feature type="binding site" evidence="1">
    <location>
        <position position="227"/>
    </location>
    <ligand>
        <name>UTP</name>
        <dbReference type="ChEBI" id="CHEBI:46398"/>
    </ligand>
</feature>
<feature type="binding site" evidence="1">
    <location>
        <position position="356"/>
    </location>
    <ligand>
        <name>L-glutamine</name>
        <dbReference type="ChEBI" id="CHEBI:58359"/>
    </ligand>
</feature>
<feature type="binding site" evidence="1">
    <location>
        <begin position="384"/>
        <end position="387"/>
    </location>
    <ligand>
        <name>L-glutamine</name>
        <dbReference type="ChEBI" id="CHEBI:58359"/>
    </ligand>
</feature>
<feature type="binding site" evidence="1">
    <location>
        <position position="407"/>
    </location>
    <ligand>
        <name>L-glutamine</name>
        <dbReference type="ChEBI" id="CHEBI:58359"/>
    </ligand>
</feature>
<feature type="binding site" evidence="1">
    <location>
        <position position="473"/>
    </location>
    <ligand>
        <name>L-glutamine</name>
        <dbReference type="ChEBI" id="CHEBI:58359"/>
    </ligand>
</feature>